<reference key="1">
    <citation type="journal article" date="2008" name="J. Bacteriol.">
        <title>Comparative genome sequence analysis of multidrug-resistant Acinetobacter baumannii.</title>
        <authorList>
            <person name="Adams M.D."/>
            <person name="Goglin K."/>
            <person name="Molyneaux N."/>
            <person name="Hujer K.M."/>
            <person name="Lavender H."/>
            <person name="Jamison J.J."/>
            <person name="MacDonald I.J."/>
            <person name="Martin K.M."/>
            <person name="Russo T."/>
            <person name="Campagnari A.A."/>
            <person name="Hujer A.M."/>
            <person name="Bonomo R.A."/>
            <person name="Gill S.R."/>
        </authorList>
    </citation>
    <scope>NUCLEOTIDE SEQUENCE [LARGE SCALE GENOMIC DNA]</scope>
    <source>
        <strain>AB0057</strain>
    </source>
</reference>
<gene>
    <name evidence="1" type="primary">rplL</name>
    <name type="ordered locus">AB57_0368</name>
</gene>
<protein>
    <recommendedName>
        <fullName evidence="1">Large ribosomal subunit protein bL12</fullName>
    </recommendedName>
    <alternativeName>
        <fullName evidence="2">50S ribosomal protein L7/L12</fullName>
    </alternativeName>
</protein>
<proteinExistence type="inferred from homology"/>
<evidence type="ECO:0000255" key="1">
    <source>
        <dbReference type="HAMAP-Rule" id="MF_00368"/>
    </source>
</evidence>
<evidence type="ECO:0000305" key="2"/>
<feature type="chain" id="PRO_1000121375" description="Large ribosomal subunit protein bL12">
    <location>
        <begin position="1"/>
        <end position="122"/>
    </location>
</feature>
<accession>B7I359</accession>
<sequence>MALTNEEILNAVAEKTVLELVELISAFEEKFNVSAAAVAVAAPAGGAAAAEEQSEFNVELTSFGANKVAVIKAVREATGLGLKEAKDLVEGAPQVLKEGVSKEEGEELKKKLEEAGATVTLK</sequence>
<dbReference type="EMBL" id="CP001182">
    <property type="protein sequence ID" value="ACJ39794.1"/>
    <property type="molecule type" value="Genomic_DNA"/>
</dbReference>
<dbReference type="RefSeq" id="WP_001229361.1">
    <property type="nucleotide sequence ID" value="NC_011586.2"/>
</dbReference>
<dbReference type="SMR" id="B7I359"/>
<dbReference type="KEGG" id="abn:AB57_0368"/>
<dbReference type="HOGENOM" id="CLU_086499_3_2_6"/>
<dbReference type="Proteomes" id="UP000007094">
    <property type="component" value="Chromosome"/>
</dbReference>
<dbReference type="GO" id="GO:0022625">
    <property type="term" value="C:cytosolic large ribosomal subunit"/>
    <property type="evidence" value="ECO:0007669"/>
    <property type="project" value="TreeGrafter"/>
</dbReference>
<dbReference type="GO" id="GO:0003729">
    <property type="term" value="F:mRNA binding"/>
    <property type="evidence" value="ECO:0007669"/>
    <property type="project" value="TreeGrafter"/>
</dbReference>
<dbReference type="GO" id="GO:0003735">
    <property type="term" value="F:structural constituent of ribosome"/>
    <property type="evidence" value="ECO:0007669"/>
    <property type="project" value="InterPro"/>
</dbReference>
<dbReference type="GO" id="GO:0006412">
    <property type="term" value="P:translation"/>
    <property type="evidence" value="ECO:0007669"/>
    <property type="project" value="UniProtKB-UniRule"/>
</dbReference>
<dbReference type="CDD" id="cd00387">
    <property type="entry name" value="Ribosomal_L7_L12"/>
    <property type="match status" value="1"/>
</dbReference>
<dbReference type="FunFam" id="3.30.1390.10:FF:000001">
    <property type="entry name" value="50S ribosomal protein L7/L12"/>
    <property type="match status" value="1"/>
</dbReference>
<dbReference type="Gene3D" id="3.30.1390.10">
    <property type="match status" value="1"/>
</dbReference>
<dbReference type="Gene3D" id="1.20.5.710">
    <property type="entry name" value="Single helix bin"/>
    <property type="match status" value="1"/>
</dbReference>
<dbReference type="HAMAP" id="MF_00368">
    <property type="entry name" value="Ribosomal_bL12"/>
    <property type="match status" value="1"/>
</dbReference>
<dbReference type="InterPro" id="IPR000206">
    <property type="entry name" value="Ribosomal_bL12"/>
</dbReference>
<dbReference type="InterPro" id="IPR013823">
    <property type="entry name" value="Ribosomal_bL12_C"/>
</dbReference>
<dbReference type="InterPro" id="IPR014719">
    <property type="entry name" value="Ribosomal_bL12_C/ClpS-like"/>
</dbReference>
<dbReference type="InterPro" id="IPR008932">
    <property type="entry name" value="Ribosomal_bL12_oligo"/>
</dbReference>
<dbReference type="InterPro" id="IPR036235">
    <property type="entry name" value="Ribosomal_bL12_oligo_N_sf"/>
</dbReference>
<dbReference type="NCBIfam" id="TIGR00855">
    <property type="entry name" value="L12"/>
    <property type="match status" value="1"/>
</dbReference>
<dbReference type="PANTHER" id="PTHR45987">
    <property type="entry name" value="39S RIBOSOMAL PROTEIN L12"/>
    <property type="match status" value="1"/>
</dbReference>
<dbReference type="PANTHER" id="PTHR45987:SF4">
    <property type="entry name" value="LARGE RIBOSOMAL SUBUNIT PROTEIN BL12M"/>
    <property type="match status" value="1"/>
</dbReference>
<dbReference type="Pfam" id="PF00542">
    <property type="entry name" value="Ribosomal_L12"/>
    <property type="match status" value="1"/>
</dbReference>
<dbReference type="Pfam" id="PF16320">
    <property type="entry name" value="Ribosomal_L12_N"/>
    <property type="match status" value="1"/>
</dbReference>
<dbReference type="SUPFAM" id="SSF54736">
    <property type="entry name" value="ClpS-like"/>
    <property type="match status" value="1"/>
</dbReference>
<dbReference type="SUPFAM" id="SSF48300">
    <property type="entry name" value="Ribosomal protein L7/12, oligomerisation (N-terminal) domain"/>
    <property type="match status" value="1"/>
</dbReference>
<name>RL7_ACIB5</name>
<organism>
    <name type="scientific">Acinetobacter baumannii (strain AB0057)</name>
    <dbReference type="NCBI Taxonomy" id="480119"/>
    <lineage>
        <taxon>Bacteria</taxon>
        <taxon>Pseudomonadati</taxon>
        <taxon>Pseudomonadota</taxon>
        <taxon>Gammaproteobacteria</taxon>
        <taxon>Moraxellales</taxon>
        <taxon>Moraxellaceae</taxon>
        <taxon>Acinetobacter</taxon>
        <taxon>Acinetobacter calcoaceticus/baumannii complex</taxon>
    </lineage>
</organism>
<keyword id="KW-0687">Ribonucleoprotein</keyword>
<keyword id="KW-0689">Ribosomal protein</keyword>
<comment type="function">
    <text evidence="1">Forms part of the ribosomal stalk which helps the ribosome interact with GTP-bound translation factors. Is thus essential for accurate translation.</text>
</comment>
<comment type="subunit">
    <text evidence="1">Homodimer. Part of the ribosomal stalk of the 50S ribosomal subunit. Forms a multimeric L10(L12)X complex, where L10 forms an elongated spine to which 2 to 4 L12 dimers bind in a sequential fashion. Binds GTP-bound translation factors.</text>
</comment>
<comment type="similarity">
    <text evidence="1">Belongs to the bacterial ribosomal protein bL12 family.</text>
</comment>